<feature type="chain" id="PRO_0000078244" description="Non-hemolytic enterotoxin 105 kDa component">
    <location>
        <begin position="1"/>
        <end position="91" status="greater than"/>
    </location>
</feature>
<feature type="non-terminal residue">
    <location>
        <position position="91"/>
    </location>
</feature>
<keyword id="KW-0903">Direct protein sequencing</keyword>
<keyword id="KW-0260">Enterotoxin</keyword>
<keyword id="KW-0378">Hydrolase</keyword>
<keyword id="KW-0479">Metal-binding</keyword>
<keyword id="KW-0482">Metalloprotease</keyword>
<keyword id="KW-0645">Protease</keyword>
<keyword id="KW-0964">Secreted</keyword>
<keyword id="KW-0800">Toxin</keyword>
<keyword id="KW-0843">Virulence</keyword>
<keyword id="KW-0862">Zinc</keyword>
<comment type="function">
    <text>This protein is a metalloprotease with gelatinolytic and collagenolytic activity and is a component of the non-hemolytic enterotoxin complex (NHE).</text>
</comment>
<comment type="cofactor">
    <cofactor>
        <name>Zn(2+)</name>
        <dbReference type="ChEBI" id="CHEBI:29105"/>
    </cofactor>
    <text>Binds 1 zinc ion.</text>
</comment>
<comment type="subcellular location">
    <subcellularLocation>
        <location>Secreted</location>
    </subcellularLocation>
</comment>
<accession>P81242</accession>
<protein>
    <recommendedName>
        <fullName>Non-hemolytic enterotoxin 105 kDa component</fullName>
        <shortName>Nhe</shortName>
        <ecNumber>3.4.24.-</ecNumber>
    </recommendedName>
</protein>
<dbReference type="EC" id="3.4.24.-"/>
<dbReference type="SMR" id="P81242"/>
<dbReference type="GO" id="GO:0005576">
    <property type="term" value="C:extracellular region"/>
    <property type="evidence" value="ECO:0007669"/>
    <property type="project" value="UniProtKB-SubCell"/>
</dbReference>
<dbReference type="GO" id="GO:0046872">
    <property type="term" value="F:metal ion binding"/>
    <property type="evidence" value="ECO:0007669"/>
    <property type="project" value="UniProtKB-KW"/>
</dbReference>
<dbReference type="GO" id="GO:0008237">
    <property type="term" value="F:metallopeptidase activity"/>
    <property type="evidence" value="ECO:0007669"/>
    <property type="project" value="UniProtKB-KW"/>
</dbReference>
<dbReference type="GO" id="GO:0090729">
    <property type="term" value="F:toxin activity"/>
    <property type="evidence" value="ECO:0007669"/>
    <property type="project" value="UniProtKB-KW"/>
</dbReference>
<dbReference type="GO" id="GO:0006508">
    <property type="term" value="P:proteolysis"/>
    <property type="evidence" value="ECO:0007669"/>
    <property type="project" value="UniProtKB-KW"/>
</dbReference>
<organism>
    <name type="scientific">Bacillus cereus</name>
    <dbReference type="NCBI Taxonomy" id="1396"/>
    <lineage>
        <taxon>Bacteria</taxon>
        <taxon>Bacillati</taxon>
        <taxon>Bacillota</taxon>
        <taxon>Bacilli</taxon>
        <taxon>Bacillales</taxon>
        <taxon>Bacillaceae</taxon>
        <taxon>Bacillus</taxon>
        <taxon>Bacillus cereus group</taxon>
    </lineage>
</organism>
<reference key="1">
    <citation type="journal article" date="1999" name="FEMS Microbiol. Lett.">
        <title>The 105-kDa protein component of Bacillus cereus non-haemolytic enterotoxin (Nhe) is a metalloprotease with gelatinolytic and collagenolytic activity.</title>
        <authorList>
            <person name="Lund T."/>
            <person name="Granum P.E."/>
        </authorList>
    </citation>
    <scope>NUCLEOTIDE SEQUENCE [GENOMIC DNA] OF 41-49</scope>
    <scope>PROTEIN SEQUENCE OF 1-40 AND 50-91</scope>
    <source>
        <strain>1230-88</strain>
    </source>
</reference>
<sequence>EEKVPYNVLKTKPVGIEKSVDEVGHISKVDETLSFQERLKGDFSQRPASITKKTAVKQVKESYSMADLNKMNDRELVETLGSIKWHQYTDL</sequence>
<proteinExistence type="evidence at protein level"/>
<name>NHE1_BACCE</name>